<comment type="similarity">
    <text evidence="1">Belongs to the cyclin family. Cyclin C subfamily.</text>
</comment>
<evidence type="ECO:0000305" key="1"/>
<proteinExistence type="evidence at transcript level"/>
<dbReference type="EMBL" id="AB015468">
    <property type="protein sequence ID" value="BAB10697.1"/>
    <property type="molecule type" value="Genomic_DNA"/>
</dbReference>
<dbReference type="EMBL" id="CP002688">
    <property type="protein sequence ID" value="AED95701.1"/>
    <property type="molecule type" value="Genomic_DNA"/>
</dbReference>
<dbReference type="EMBL" id="BX833973">
    <property type="status" value="NOT_ANNOTATED_CDS"/>
    <property type="molecule type" value="mRNA"/>
</dbReference>
<dbReference type="RefSeq" id="NP_199675.2">
    <property type="nucleotide sequence ID" value="NM_124240.3"/>
</dbReference>
<dbReference type="SMR" id="Q9FJK6"/>
<dbReference type="BioGRID" id="20167">
    <property type="interactions" value="1"/>
</dbReference>
<dbReference type="FunCoup" id="Q9FJK6">
    <property type="interactions" value="3902"/>
</dbReference>
<dbReference type="STRING" id="3702.Q9FJK6"/>
<dbReference type="PaxDb" id="3702-AT5G48640.1"/>
<dbReference type="ProteomicsDB" id="223900"/>
<dbReference type="EnsemblPlants" id="AT5G48640.1">
    <property type="protein sequence ID" value="AT5G48640.1"/>
    <property type="gene ID" value="AT5G48640"/>
</dbReference>
<dbReference type="GeneID" id="834921"/>
<dbReference type="Gramene" id="AT5G48640.1">
    <property type="protein sequence ID" value="AT5G48640.1"/>
    <property type="gene ID" value="AT5G48640"/>
</dbReference>
<dbReference type="KEGG" id="ath:AT5G48640"/>
<dbReference type="Araport" id="AT5G48640"/>
<dbReference type="TAIR" id="AT5G48640"/>
<dbReference type="eggNOG" id="KOG0794">
    <property type="taxonomic scope" value="Eukaryota"/>
</dbReference>
<dbReference type="HOGENOM" id="CLU_034754_0_0_1"/>
<dbReference type="InParanoid" id="Q9FJK6"/>
<dbReference type="OMA" id="XEGEQGP"/>
<dbReference type="OrthoDB" id="10266018at2759"/>
<dbReference type="PhylomeDB" id="Q9FJK6"/>
<dbReference type="PRO" id="PR:Q9FJK6"/>
<dbReference type="Proteomes" id="UP000006548">
    <property type="component" value="Chromosome 5"/>
</dbReference>
<dbReference type="ExpressionAtlas" id="Q9FJK6">
    <property type="expression patterns" value="baseline and differential"/>
</dbReference>
<dbReference type="GO" id="GO:0016538">
    <property type="term" value="F:cyclin-dependent protein serine/threonine kinase regulator activity"/>
    <property type="evidence" value="ECO:0007669"/>
    <property type="project" value="InterPro"/>
</dbReference>
<dbReference type="GO" id="GO:0051301">
    <property type="term" value="P:cell division"/>
    <property type="evidence" value="ECO:0007669"/>
    <property type="project" value="UniProtKB-KW"/>
</dbReference>
<dbReference type="GO" id="GO:0006357">
    <property type="term" value="P:regulation of transcription by RNA polymerase II"/>
    <property type="evidence" value="ECO:0007669"/>
    <property type="project" value="InterPro"/>
</dbReference>
<dbReference type="CDD" id="cd20571">
    <property type="entry name" value="CYCLIN_AtCycC_rpt1"/>
    <property type="match status" value="1"/>
</dbReference>
<dbReference type="CDD" id="cd20572">
    <property type="entry name" value="CYCLIN_AtCycC_rpt2"/>
    <property type="match status" value="1"/>
</dbReference>
<dbReference type="Gene3D" id="1.10.472.10">
    <property type="entry name" value="Cyclin-like"/>
    <property type="match status" value="2"/>
</dbReference>
<dbReference type="InterPro" id="IPR013763">
    <property type="entry name" value="Cyclin-like_dom"/>
</dbReference>
<dbReference type="InterPro" id="IPR036915">
    <property type="entry name" value="Cyclin-like_sf"/>
</dbReference>
<dbReference type="InterPro" id="IPR043198">
    <property type="entry name" value="Cyclin/Ssn8"/>
</dbReference>
<dbReference type="InterPro" id="IPR006671">
    <property type="entry name" value="Cyclin_N"/>
</dbReference>
<dbReference type="PANTHER" id="PTHR10026">
    <property type="entry name" value="CYCLIN"/>
    <property type="match status" value="1"/>
</dbReference>
<dbReference type="Pfam" id="PF00134">
    <property type="entry name" value="Cyclin_N"/>
    <property type="match status" value="1"/>
</dbReference>
<dbReference type="PIRSF" id="PIRSF028758">
    <property type="entry name" value="Cyclin, C/H/G types"/>
    <property type="match status" value="1"/>
</dbReference>
<dbReference type="SMART" id="SM00385">
    <property type="entry name" value="CYCLIN"/>
    <property type="match status" value="2"/>
</dbReference>
<dbReference type="SUPFAM" id="SSF47954">
    <property type="entry name" value="Cyclin-like"/>
    <property type="match status" value="2"/>
</dbReference>
<organism>
    <name type="scientific">Arabidopsis thaliana</name>
    <name type="common">Mouse-ear cress</name>
    <dbReference type="NCBI Taxonomy" id="3702"/>
    <lineage>
        <taxon>Eukaryota</taxon>
        <taxon>Viridiplantae</taxon>
        <taxon>Streptophyta</taxon>
        <taxon>Embryophyta</taxon>
        <taxon>Tracheophyta</taxon>
        <taxon>Spermatophyta</taxon>
        <taxon>Magnoliopsida</taxon>
        <taxon>eudicotyledons</taxon>
        <taxon>Gunneridae</taxon>
        <taxon>Pentapetalae</taxon>
        <taxon>rosids</taxon>
        <taxon>malvids</taxon>
        <taxon>Brassicales</taxon>
        <taxon>Brassicaceae</taxon>
        <taxon>Camelineae</taxon>
        <taxon>Arabidopsis</taxon>
    </lineage>
</organism>
<accession>Q9FJK6</accession>
<sequence>MAANFWNSSHYKQLLDPEEVDVVHDLDKERGISIDDFKLIKFHMSNHIMKLAQHIKVRQRVVATAITYMRRVYIRKSMVEFEPRLVALTCLYLASKAEESIVQARNLVFYIKRLYPDEYNKYELKDILGMEMKVLEALDYYLVVFHPYRSLSEFLQDAALNDVNMNQITWGIVNDTYKMDLILVHPPYRIALACIYIASVHREKDITAWFEDLHEDMNLVKNIAMEILDFYENYRTITEEKVNSAFSKLALKL</sequence>
<gene>
    <name type="primary">CYCC1-1</name>
    <name type="ordered locus">At5g48640</name>
    <name type="ORF">K15N18.11</name>
</gene>
<reference key="1">
    <citation type="journal article" date="1998" name="DNA Res.">
        <title>Structural analysis of Arabidopsis thaliana chromosome 5. VII. Sequence features of the regions of 1,013,767 bp covered by sixteen physically assigned P1 and TAC clones.</title>
        <authorList>
            <person name="Nakamura Y."/>
            <person name="Sato S."/>
            <person name="Asamizu E."/>
            <person name="Kaneko T."/>
            <person name="Kotani H."/>
            <person name="Miyajima N."/>
            <person name="Tabata S."/>
        </authorList>
    </citation>
    <scope>NUCLEOTIDE SEQUENCE [LARGE SCALE GENOMIC DNA]</scope>
    <source>
        <strain>cv. Columbia</strain>
    </source>
</reference>
<reference key="2">
    <citation type="journal article" date="2017" name="Plant J.">
        <title>Araport11: a complete reannotation of the Arabidopsis thaliana reference genome.</title>
        <authorList>
            <person name="Cheng C.Y."/>
            <person name="Krishnakumar V."/>
            <person name="Chan A.P."/>
            <person name="Thibaud-Nissen F."/>
            <person name="Schobel S."/>
            <person name="Town C.D."/>
        </authorList>
    </citation>
    <scope>GENOME REANNOTATION</scope>
    <source>
        <strain>cv. Columbia</strain>
    </source>
</reference>
<reference key="3">
    <citation type="journal article" date="2004" name="Genome Res.">
        <title>Whole genome sequence comparisons and 'full-length' cDNA sequences: a combined approach to evaluate and improve Arabidopsis genome annotation.</title>
        <authorList>
            <person name="Castelli V."/>
            <person name="Aury J.-M."/>
            <person name="Jaillon O."/>
            <person name="Wincker P."/>
            <person name="Clepet C."/>
            <person name="Menard M."/>
            <person name="Cruaud C."/>
            <person name="Quetier F."/>
            <person name="Scarpelli C."/>
            <person name="Schaechter V."/>
            <person name="Temple G."/>
            <person name="Caboche M."/>
            <person name="Weissenbach J."/>
            <person name="Salanoubat M."/>
        </authorList>
    </citation>
    <scope>NUCLEOTIDE SEQUENCE [LARGE SCALE MRNA]</scope>
    <source>
        <strain>cv. Columbia</strain>
    </source>
</reference>
<reference key="4">
    <citation type="journal article" date="2004" name="Plant Physiol.">
        <title>Genome-wide analysis of the cyclin family in Arabidopsis and comparative phylogenetic analysis of plant cyclin-like proteins.</title>
        <authorList>
            <person name="Wang G."/>
            <person name="Kong H."/>
            <person name="Sun Y."/>
            <person name="Zhang X."/>
            <person name="Zhang W."/>
            <person name="Altman N."/>
            <person name="dePamphilis C.W."/>
            <person name="Ma H."/>
        </authorList>
    </citation>
    <scope>GENE FAMILY</scope>
    <scope>NOMENCLATURE</scope>
</reference>
<feature type="chain" id="PRO_0000287018" description="Cyclin-C1-1">
    <location>
        <begin position="1"/>
        <end position="253"/>
    </location>
</feature>
<protein>
    <recommendedName>
        <fullName>Cyclin-C1-1</fullName>
        <shortName>CycC1;1</shortName>
    </recommendedName>
</protein>
<name>CCC11_ARATH</name>
<keyword id="KW-0131">Cell cycle</keyword>
<keyword id="KW-0132">Cell division</keyword>
<keyword id="KW-0195">Cyclin</keyword>
<keyword id="KW-1185">Reference proteome</keyword>